<protein>
    <recommendedName>
        <fullName evidence="5">Small ribosomal subunit protein uS14m</fullName>
    </recommendedName>
    <alternativeName>
        <fullName>28S ribosomal protein S14, mitochondrial</fullName>
        <shortName>MRP-S14</shortName>
        <shortName>S14mt</shortName>
    </alternativeName>
</protein>
<comment type="subunit">
    <text evidence="1 3">Component of the mitochondrial small ribosomal subunit (mt-SSU). Mature mammalian 55S mitochondrial ribosomes consist of a small (28S) and a large (39S) subunit. The 28S small subunit contains a 12S ribosomal RNA (12S mt-rRNA) and 30 different proteins. The 39S large subunit contains a 16S rRNA (16S mt-rRNA), a copy of mitochondrial valine transfer RNA (mt-tRNA(Val)), which plays an integral structural role, and 52 different proteins (PubMed:25838379). Interacts with LIAT1 (By similarity).</text>
</comment>
<comment type="interaction">
    <interactant intactId="EBI-1045956">
        <id>O60783</id>
    </interactant>
    <interactant intactId="EBI-348399">
        <id>P22607</id>
        <label>FGFR3</label>
    </interactant>
    <organismsDiffer>false</organismsDiffer>
    <experiments>3</experiments>
</comment>
<comment type="interaction">
    <interactant intactId="EBI-1045956">
        <id>O60783</id>
    </interactant>
    <interactant intactId="EBI-351506">
        <id>P06396</id>
        <label>GSN</label>
    </interactant>
    <organismsDiffer>false</organismsDiffer>
    <experiments>3</experiments>
</comment>
<comment type="interaction">
    <interactant intactId="EBI-1045956">
        <id>O60783</id>
    </interactant>
    <interactant intactId="EBI-741480">
        <id>Q9UMX0</id>
        <label>UBQLN1</label>
    </interactant>
    <organismsDiffer>false</organismsDiffer>
    <experiments>3</experiments>
</comment>
<comment type="interaction">
    <interactant intactId="EBI-1045956">
        <id>O60783</id>
    </interactant>
    <interactant intactId="EBI-25900580">
        <id>Q9Y649</id>
    </interactant>
    <organismsDiffer>false</organismsDiffer>
    <experiments>3</experiments>
</comment>
<comment type="subcellular location">
    <subcellularLocation>
        <location evidence="3">Mitochondrion</location>
    </subcellularLocation>
</comment>
<comment type="disease" evidence="4">
    <disease id="DI-05529">
        <name>Combined oxidative phosphorylation deficiency 38</name>
        <acronym>COXPD38</acronym>
        <description>An autosomal recessive disorder due to mitochondrial dysfunction and characterized by perinatal hypertrophic cardiomyopathy, growth retardation, muscle hypotonia, elevated lactate, dysmorphy and intellectual disability.</description>
        <dbReference type="MIM" id="618378"/>
    </disease>
    <text>The disease may be caused by variants affecting the gene represented in this entry.</text>
</comment>
<comment type="similarity">
    <text evidence="6">Belongs to the universal ribosomal protein uS14 family.</text>
</comment>
<name>RT14_HUMAN</name>
<keyword id="KW-0002">3D-structure</keyword>
<keyword id="KW-0225">Disease variant</keyword>
<keyword id="KW-0496">Mitochondrion</keyword>
<keyword id="KW-1274">Primary mitochondrial disease</keyword>
<keyword id="KW-1267">Proteomics identification</keyword>
<keyword id="KW-1185">Reference proteome</keyword>
<keyword id="KW-0687">Ribonucleoprotein</keyword>
<keyword id="KW-0689">Ribosomal protein</keyword>
<dbReference type="EMBL" id="AL049705">
    <property type="protein sequence ID" value="CAB41269.1"/>
    <property type="molecule type" value="mRNA"/>
</dbReference>
<dbReference type="EMBL" id="Z99297">
    <property type="status" value="NOT_ANNOTATED_CDS"/>
    <property type="molecule type" value="Genomic_DNA"/>
</dbReference>
<dbReference type="EMBL" id="BC009788">
    <property type="protein sequence ID" value="AAH09788.1"/>
    <property type="molecule type" value="mRNA"/>
</dbReference>
<dbReference type="CCDS" id="CCDS1316.1"/>
<dbReference type="RefSeq" id="NP_071383.1">
    <property type="nucleotide sequence ID" value="NM_022100.3"/>
</dbReference>
<dbReference type="PDB" id="3J9M">
    <property type="method" value="EM"/>
    <property type="resolution" value="3.50 A"/>
    <property type="chains" value="AK=1-128"/>
</dbReference>
<dbReference type="PDB" id="6NU2">
    <property type="method" value="EM"/>
    <property type="resolution" value="3.90 A"/>
    <property type="chains" value="AK=28-128"/>
</dbReference>
<dbReference type="PDB" id="6NU3">
    <property type="method" value="EM"/>
    <property type="resolution" value="4.40 A"/>
    <property type="chains" value="AK=1-128"/>
</dbReference>
<dbReference type="PDB" id="6RW4">
    <property type="method" value="EM"/>
    <property type="resolution" value="2.97 A"/>
    <property type="chains" value="K=1-128"/>
</dbReference>
<dbReference type="PDB" id="6RW5">
    <property type="method" value="EM"/>
    <property type="resolution" value="3.14 A"/>
    <property type="chains" value="K=1-128"/>
</dbReference>
<dbReference type="PDB" id="6VLZ">
    <property type="method" value="EM"/>
    <property type="resolution" value="2.97 A"/>
    <property type="chains" value="AK=1-128"/>
</dbReference>
<dbReference type="PDB" id="6VMI">
    <property type="method" value="EM"/>
    <property type="resolution" value="2.96 A"/>
    <property type="chains" value="AK=1-128"/>
</dbReference>
<dbReference type="PDB" id="6ZM5">
    <property type="method" value="EM"/>
    <property type="resolution" value="2.89 A"/>
    <property type="chains" value="AK=1-128"/>
</dbReference>
<dbReference type="PDB" id="6ZM6">
    <property type="method" value="EM"/>
    <property type="resolution" value="2.59 A"/>
    <property type="chains" value="AK=1-128"/>
</dbReference>
<dbReference type="PDB" id="6ZS9">
    <property type="method" value="EM"/>
    <property type="resolution" value="4.00 A"/>
    <property type="chains" value="AK=1-128"/>
</dbReference>
<dbReference type="PDB" id="6ZSA">
    <property type="method" value="EM"/>
    <property type="resolution" value="4.00 A"/>
    <property type="chains" value="AK=1-128"/>
</dbReference>
<dbReference type="PDB" id="6ZSB">
    <property type="method" value="EM"/>
    <property type="resolution" value="4.50 A"/>
    <property type="chains" value="AK=1-128"/>
</dbReference>
<dbReference type="PDB" id="6ZSC">
    <property type="method" value="EM"/>
    <property type="resolution" value="3.50 A"/>
    <property type="chains" value="AK=1-128"/>
</dbReference>
<dbReference type="PDB" id="6ZSD">
    <property type="method" value="EM"/>
    <property type="resolution" value="3.70 A"/>
    <property type="chains" value="AK=1-128"/>
</dbReference>
<dbReference type="PDB" id="6ZSE">
    <property type="method" value="EM"/>
    <property type="resolution" value="5.00 A"/>
    <property type="chains" value="AK=1-128"/>
</dbReference>
<dbReference type="PDB" id="6ZSG">
    <property type="method" value="EM"/>
    <property type="resolution" value="4.00 A"/>
    <property type="chains" value="AK=1-128"/>
</dbReference>
<dbReference type="PDB" id="7A5F">
    <property type="method" value="EM"/>
    <property type="resolution" value="4.40 A"/>
    <property type="chains" value="K6=1-128"/>
</dbReference>
<dbReference type="PDB" id="7A5G">
    <property type="method" value="EM"/>
    <property type="resolution" value="4.33 A"/>
    <property type="chains" value="K6=1-128"/>
</dbReference>
<dbReference type="PDB" id="7A5I">
    <property type="method" value="EM"/>
    <property type="resolution" value="3.70 A"/>
    <property type="chains" value="K6=1-128"/>
</dbReference>
<dbReference type="PDB" id="7A5K">
    <property type="method" value="EM"/>
    <property type="resolution" value="3.70 A"/>
    <property type="chains" value="K6=1-128"/>
</dbReference>
<dbReference type="PDB" id="7L08">
    <property type="method" value="EM"/>
    <property type="resolution" value="3.49 A"/>
    <property type="chains" value="AK=1-128"/>
</dbReference>
<dbReference type="PDB" id="7OG4">
    <property type="method" value="EM"/>
    <property type="resolution" value="3.80 A"/>
    <property type="chains" value="AK=1-128"/>
</dbReference>
<dbReference type="PDB" id="7P2E">
    <property type="method" value="EM"/>
    <property type="resolution" value="2.40 A"/>
    <property type="chains" value="K=1-128"/>
</dbReference>
<dbReference type="PDB" id="7PNX">
    <property type="method" value="EM"/>
    <property type="resolution" value="2.76 A"/>
    <property type="chains" value="K=1-128"/>
</dbReference>
<dbReference type="PDB" id="7PNY">
    <property type="method" value="EM"/>
    <property type="resolution" value="3.06 A"/>
    <property type="chains" value="K=1-128"/>
</dbReference>
<dbReference type="PDB" id="7PNZ">
    <property type="method" value="EM"/>
    <property type="resolution" value="3.09 A"/>
    <property type="chains" value="K=1-128"/>
</dbReference>
<dbReference type="PDB" id="7PO0">
    <property type="method" value="EM"/>
    <property type="resolution" value="2.90 A"/>
    <property type="chains" value="K=1-128"/>
</dbReference>
<dbReference type="PDB" id="7PO1">
    <property type="method" value="EM"/>
    <property type="resolution" value="2.92 A"/>
    <property type="chains" value="K=1-128"/>
</dbReference>
<dbReference type="PDB" id="7PO2">
    <property type="method" value="EM"/>
    <property type="resolution" value="3.09 A"/>
    <property type="chains" value="K=1-128"/>
</dbReference>
<dbReference type="PDB" id="7PO3">
    <property type="method" value="EM"/>
    <property type="resolution" value="2.92 A"/>
    <property type="chains" value="K=1-128"/>
</dbReference>
<dbReference type="PDB" id="7QI4">
    <property type="method" value="EM"/>
    <property type="resolution" value="2.21 A"/>
    <property type="chains" value="AK=1-128"/>
</dbReference>
<dbReference type="PDB" id="7QI5">
    <property type="method" value="EM"/>
    <property type="resolution" value="2.63 A"/>
    <property type="chains" value="AK=1-128"/>
</dbReference>
<dbReference type="PDB" id="7QI6">
    <property type="method" value="EM"/>
    <property type="resolution" value="2.98 A"/>
    <property type="chains" value="AK=1-128"/>
</dbReference>
<dbReference type="PDB" id="8ANY">
    <property type="method" value="EM"/>
    <property type="resolution" value="2.85 A"/>
    <property type="chains" value="AK=1-128"/>
</dbReference>
<dbReference type="PDB" id="8CSP">
    <property type="method" value="EM"/>
    <property type="resolution" value="2.66 A"/>
    <property type="chains" value="K=1-128"/>
</dbReference>
<dbReference type="PDB" id="8CSQ">
    <property type="method" value="EM"/>
    <property type="resolution" value="2.54 A"/>
    <property type="chains" value="K=1-128"/>
</dbReference>
<dbReference type="PDB" id="8CSR">
    <property type="method" value="EM"/>
    <property type="resolution" value="2.54 A"/>
    <property type="chains" value="K=1-128"/>
</dbReference>
<dbReference type="PDB" id="8CSS">
    <property type="method" value="EM"/>
    <property type="resolution" value="2.36 A"/>
    <property type="chains" value="K=1-128"/>
</dbReference>
<dbReference type="PDB" id="8CST">
    <property type="method" value="EM"/>
    <property type="resolution" value="2.85 A"/>
    <property type="chains" value="K=1-128"/>
</dbReference>
<dbReference type="PDB" id="8CSU">
    <property type="method" value="EM"/>
    <property type="resolution" value="3.03 A"/>
    <property type="chains" value="K=1-128"/>
</dbReference>
<dbReference type="PDB" id="8K2A">
    <property type="method" value="EM"/>
    <property type="resolution" value="2.90 A"/>
    <property type="chains" value="SN=1-128"/>
</dbReference>
<dbReference type="PDB" id="8OIR">
    <property type="method" value="EM"/>
    <property type="resolution" value="3.10 A"/>
    <property type="chains" value="AK=1-128"/>
</dbReference>
<dbReference type="PDB" id="8OIS">
    <property type="method" value="EM"/>
    <property type="resolution" value="3.00 A"/>
    <property type="chains" value="AK=1-128"/>
</dbReference>
<dbReference type="PDB" id="8QRK">
    <property type="method" value="EM"/>
    <property type="resolution" value="6.69 A"/>
    <property type="chains" value="K=1-128"/>
</dbReference>
<dbReference type="PDB" id="8QRL">
    <property type="method" value="EM"/>
    <property type="resolution" value="3.34 A"/>
    <property type="chains" value="K=1-128"/>
</dbReference>
<dbReference type="PDB" id="8QRM">
    <property type="method" value="EM"/>
    <property type="resolution" value="3.05 A"/>
    <property type="chains" value="K=1-128"/>
</dbReference>
<dbReference type="PDB" id="8QRN">
    <property type="method" value="EM"/>
    <property type="resolution" value="2.98 A"/>
    <property type="chains" value="K=1-128"/>
</dbReference>
<dbReference type="PDB" id="8RRI">
    <property type="method" value="EM"/>
    <property type="resolution" value="2.40 A"/>
    <property type="chains" value="AK=1-128"/>
</dbReference>
<dbReference type="PDB" id="8XT0">
    <property type="method" value="EM"/>
    <property type="resolution" value="3.20 A"/>
    <property type="chains" value="SN=1-128"/>
</dbReference>
<dbReference type="PDB" id="8XT2">
    <property type="method" value="EM"/>
    <property type="resolution" value="3.30 A"/>
    <property type="chains" value="SN=1-128"/>
</dbReference>
<dbReference type="PDBsum" id="3J9M"/>
<dbReference type="PDBsum" id="6NU2"/>
<dbReference type="PDBsum" id="6NU3"/>
<dbReference type="PDBsum" id="6RW4"/>
<dbReference type="PDBsum" id="6RW5"/>
<dbReference type="PDBsum" id="6VLZ"/>
<dbReference type="PDBsum" id="6VMI"/>
<dbReference type="PDBsum" id="6ZM5"/>
<dbReference type="PDBsum" id="6ZM6"/>
<dbReference type="PDBsum" id="6ZS9"/>
<dbReference type="PDBsum" id="6ZSA"/>
<dbReference type="PDBsum" id="6ZSB"/>
<dbReference type="PDBsum" id="6ZSC"/>
<dbReference type="PDBsum" id="6ZSD"/>
<dbReference type="PDBsum" id="6ZSE"/>
<dbReference type="PDBsum" id="6ZSG"/>
<dbReference type="PDBsum" id="7A5F"/>
<dbReference type="PDBsum" id="7A5G"/>
<dbReference type="PDBsum" id="7A5I"/>
<dbReference type="PDBsum" id="7A5K"/>
<dbReference type="PDBsum" id="7L08"/>
<dbReference type="PDBsum" id="7OG4"/>
<dbReference type="PDBsum" id="7P2E"/>
<dbReference type="PDBsum" id="7PNX"/>
<dbReference type="PDBsum" id="7PNY"/>
<dbReference type="PDBsum" id="7PNZ"/>
<dbReference type="PDBsum" id="7PO0"/>
<dbReference type="PDBsum" id="7PO1"/>
<dbReference type="PDBsum" id="7PO2"/>
<dbReference type="PDBsum" id="7PO3"/>
<dbReference type="PDBsum" id="7QI4"/>
<dbReference type="PDBsum" id="7QI5"/>
<dbReference type="PDBsum" id="7QI6"/>
<dbReference type="PDBsum" id="8ANY"/>
<dbReference type="PDBsum" id="8CSP"/>
<dbReference type="PDBsum" id="8CSQ"/>
<dbReference type="PDBsum" id="8CSR"/>
<dbReference type="PDBsum" id="8CSS"/>
<dbReference type="PDBsum" id="8CST"/>
<dbReference type="PDBsum" id="8CSU"/>
<dbReference type="PDBsum" id="8K2A"/>
<dbReference type="PDBsum" id="8OIR"/>
<dbReference type="PDBsum" id="8OIS"/>
<dbReference type="PDBsum" id="8QRK"/>
<dbReference type="PDBsum" id="8QRL"/>
<dbReference type="PDBsum" id="8QRM"/>
<dbReference type="PDBsum" id="8QRN"/>
<dbReference type="PDBsum" id="8RRI"/>
<dbReference type="PDBsum" id="8XT0"/>
<dbReference type="PDBsum" id="8XT2"/>
<dbReference type="EMDB" id="EMD-0514"/>
<dbReference type="EMDB" id="EMD-0515"/>
<dbReference type="EMDB" id="EMD-10021"/>
<dbReference type="EMDB" id="EMD-10022"/>
<dbReference type="EMDB" id="EMD-11278"/>
<dbReference type="EMDB" id="EMD-11279"/>
<dbReference type="EMDB" id="EMD-11390"/>
<dbReference type="EMDB" id="EMD-11391"/>
<dbReference type="EMDB" id="EMD-11392"/>
<dbReference type="EMDB" id="EMD-11393"/>
<dbReference type="EMDB" id="EMD-11394"/>
<dbReference type="EMDB" id="EMD-11395"/>
<dbReference type="EMDB" id="EMD-11397"/>
<dbReference type="EMDB" id="EMD-11641"/>
<dbReference type="EMDB" id="EMD-11642"/>
<dbReference type="EMDB" id="EMD-11644"/>
<dbReference type="EMDB" id="EMD-11646"/>
<dbReference type="EMDB" id="EMD-12877"/>
<dbReference type="EMDB" id="EMD-13170"/>
<dbReference type="EMDB" id="EMD-13555"/>
<dbReference type="EMDB" id="EMD-13556"/>
<dbReference type="EMDB" id="EMD-13557"/>
<dbReference type="EMDB" id="EMD-13558"/>
<dbReference type="EMDB" id="EMD-13559"/>
<dbReference type="EMDB" id="EMD-13560"/>
<dbReference type="EMDB" id="EMD-13561"/>
<dbReference type="EMDB" id="EMD-13980"/>
<dbReference type="EMDB" id="EMD-13981"/>
<dbReference type="EMDB" id="EMD-13982"/>
<dbReference type="EMDB" id="EMD-15544"/>
<dbReference type="EMDB" id="EMD-16897"/>
<dbReference type="EMDB" id="EMD-16898"/>
<dbReference type="EMDB" id="EMD-19460"/>
<dbReference type="EMDB" id="EMD-21233"/>
<dbReference type="EMDB" id="EMD-21242"/>
<dbReference type="EMDB" id="EMD-23096"/>
<dbReference type="EMDB" id="EMD-26966"/>
<dbReference type="EMDB" id="EMD-26967"/>
<dbReference type="EMDB" id="EMD-26968"/>
<dbReference type="EMDB" id="EMD-26969"/>
<dbReference type="EMDB" id="EMD-26970"/>
<dbReference type="EMDB" id="EMD-26971"/>
<dbReference type="EMDB" id="EMD-36836"/>
<dbReference type="EMDB" id="EMD-38632"/>
<dbReference type="EMDB" id="EMD-38634"/>
<dbReference type="SMR" id="O60783"/>
<dbReference type="BioGRID" id="121999">
    <property type="interactions" value="241"/>
</dbReference>
<dbReference type="ComplexPortal" id="CPX-5225">
    <property type="entry name" value="28S mitochondrial small ribosomal subunit"/>
</dbReference>
<dbReference type="CORUM" id="O60783"/>
<dbReference type="FunCoup" id="O60783">
    <property type="interactions" value="2082"/>
</dbReference>
<dbReference type="IntAct" id="O60783">
    <property type="interactions" value="108"/>
</dbReference>
<dbReference type="MINT" id="O60783"/>
<dbReference type="STRING" id="9606.ENSP00000420714"/>
<dbReference type="GlyGen" id="O60783">
    <property type="glycosylation" value="1 site, 1 O-linked glycan (1 site)"/>
</dbReference>
<dbReference type="SwissPalm" id="O60783"/>
<dbReference type="BioMuta" id="MRPS14"/>
<dbReference type="jPOST" id="O60783"/>
<dbReference type="MassIVE" id="O60783"/>
<dbReference type="PaxDb" id="9606-ENSP00000420714"/>
<dbReference type="PeptideAtlas" id="O60783"/>
<dbReference type="ProteomicsDB" id="49596"/>
<dbReference type="Pumba" id="O60783"/>
<dbReference type="TopDownProteomics" id="O60783"/>
<dbReference type="Antibodypedia" id="63335">
    <property type="antibodies" value="47 antibodies from 14 providers"/>
</dbReference>
<dbReference type="DNASU" id="63931"/>
<dbReference type="Ensembl" id="ENST00000476371.1">
    <property type="protein sequence ID" value="ENSP00000420714.1"/>
    <property type="gene ID" value="ENSG00000120333.4"/>
</dbReference>
<dbReference type="GeneID" id="63931"/>
<dbReference type="KEGG" id="hsa:63931"/>
<dbReference type="MANE-Select" id="ENST00000476371.1">
    <property type="protein sequence ID" value="ENSP00000420714.1"/>
    <property type="RefSeq nucleotide sequence ID" value="NM_022100.3"/>
    <property type="RefSeq protein sequence ID" value="NP_071383.1"/>
</dbReference>
<dbReference type="UCSC" id="uc001gkk.4">
    <property type="organism name" value="human"/>
</dbReference>
<dbReference type="AGR" id="HGNC:14049"/>
<dbReference type="CTD" id="63931"/>
<dbReference type="DisGeNET" id="63931"/>
<dbReference type="GeneCards" id="MRPS14"/>
<dbReference type="HGNC" id="HGNC:14049">
    <property type="gene designation" value="MRPS14"/>
</dbReference>
<dbReference type="HPA" id="ENSG00000120333">
    <property type="expression patterns" value="Low tissue specificity"/>
</dbReference>
<dbReference type="MalaCards" id="MRPS14"/>
<dbReference type="MIM" id="611978">
    <property type="type" value="gene"/>
</dbReference>
<dbReference type="MIM" id="618378">
    <property type="type" value="phenotype"/>
</dbReference>
<dbReference type="neXtProt" id="NX_O60783"/>
<dbReference type="OpenTargets" id="ENSG00000120333"/>
<dbReference type="PharmGKB" id="PA30998"/>
<dbReference type="VEuPathDB" id="HostDB:ENSG00000120333"/>
<dbReference type="eggNOG" id="KOG1741">
    <property type="taxonomic scope" value="Eukaryota"/>
</dbReference>
<dbReference type="GeneTree" id="ENSGT00390000015663"/>
<dbReference type="HOGENOM" id="CLU_139869_1_0_1"/>
<dbReference type="InParanoid" id="O60783"/>
<dbReference type="OMA" id="FGLCRNQ"/>
<dbReference type="OrthoDB" id="413436at2759"/>
<dbReference type="PAN-GO" id="O60783">
    <property type="GO annotations" value="3 GO annotations based on evolutionary models"/>
</dbReference>
<dbReference type="PhylomeDB" id="O60783"/>
<dbReference type="TreeFam" id="TF320418"/>
<dbReference type="PathwayCommons" id="O60783"/>
<dbReference type="Reactome" id="R-HSA-5368286">
    <property type="pathway name" value="Mitochondrial translation initiation"/>
</dbReference>
<dbReference type="Reactome" id="R-HSA-5389840">
    <property type="pathway name" value="Mitochondrial translation elongation"/>
</dbReference>
<dbReference type="Reactome" id="R-HSA-5419276">
    <property type="pathway name" value="Mitochondrial translation termination"/>
</dbReference>
<dbReference type="SignaLink" id="O60783"/>
<dbReference type="SIGNOR" id="O60783"/>
<dbReference type="BioGRID-ORCS" id="63931">
    <property type="hits" value="568 hits in 1171 CRISPR screens"/>
</dbReference>
<dbReference type="ChiTaRS" id="MRPS14">
    <property type="organism name" value="human"/>
</dbReference>
<dbReference type="GenomeRNAi" id="63931"/>
<dbReference type="Pharos" id="O60783">
    <property type="development level" value="Tdark"/>
</dbReference>
<dbReference type="PRO" id="PR:O60783"/>
<dbReference type="Proteomes" id="UP000005640">
    <property type="component" value="Chromosome 1"/>
</dbReference>
<dbReference type="RNAct" id="O60783">
    <property type="molecule type" value="protein"/>
</dbReference>
<dbReference type="Bgee" id="ENSG00000120333">
    <property type="expression patterns" value="Expressed in tendon of biceps brachii and 203 other cell types or tissues"/>
</dbReference>
<dbReference type="ExpressionAtlas" id="O60783">
    <property type="expression patterns" value="baseline and differential"/>
</dbReference>
<dbReference type="GO" id="GO:0005743">
    <property type="term" value="C:mitochondrial inner membrane"/>
    <property type="evidence" value="ECO:0000304"/>
    <property type="project" value="Reactome"/>
</dbReference>
<dbReference type="GO" id="GO:0005761">
    <property type="term" value="C:mitochondrial ribosome"/>
    <property type="evidence" value="ECO:0000303"/>
    <property type="project" value="UniProtKB"/>
</dbReference>
<dbReference type="GO" id="GO:0005763">
    <property type="term" value="C:mitochondrial small ribosomal subunit"/>
    <property type="evidence" value="ECO:0000314"/>
    <property type="project" value="UniProtKB"/>
</dbReference>
<dbReference type="GO" id="GO:0005739">
    <property type="term" value="C:mitochondrion"/>
    <property type="evidence" value="ECO:0000314"/>
    <property type="project" value="HPA"/>
</dbReference>
<dbReference type="GO" id="GO:0031965">
    <property type="term" value="C:nuclear membrane"/>
    <property type="evidence" value="ECO:0000314"/>
    <property type="project" value="HPA"/>
</dbReference>
<dbReference type="GO" id="GO:0003723">
    <property type="term" value="F:RNA binding"/>
    <property type="evidence" value="ECO:0007005"/>
    <property type="project" value="UniProtKB"/>
</dbReference>
<dbReference type="GO" id="GO:0003735">
    <property type="term" value="F:structural constituent of ribosome"/>
    <property type="evidence" value="ECO:0000318"/>
    <property type="project" value="GO_Central"/>
</dbReference>
<dbReference type="GO" id="GO:0032543">
    <property type="term" value="P:mitochondrial translation"/>
    <property type="evidence" value="ECO:0000315"/>
    <property type="project" value="UniProtKB"/>
</dbReference>
<dbReference type="GO" id="GO:0006412">
    <property type="term" value="P:translation"/>
    <property type="evidence" value="ECO:0000318"/>
    <property type="project" value="GO_Central"/>
</dbReference>
<dbReference type="FunFam" id="1.10.287.1480:FF:000001">
    <property type="entry name" value="30S ribosomal protein S14"/>
    <property type="match status" value="1"/>
</dbReference>
<dbReference type="Gene3D" id="1.10.287.1480">
    <property type="match status" value="1"/>
</dbReference>
<dbReference type="InterPro" id="IPR001209">
    <property type="entry name" value="Ribosomal_uS14"/>
</dbReference>
<dbReference type="NCBIfam" id="NF006477">
    <property type="entry name" value="PRK08881.1"/>
    <property type="match status" value="1"/>
</dbReference>
<dbReference type="PANTHER" id="PTHR19836">
    <property type="entry name" value="30S RIBOSOMAL PROTEIN S14"/>
    <property type="match status" value="1"/>
</dbReference>
<dbReference type="PANTHER" id="PTHR19836:SF19">
    <property type="entry name" value="SMALL RIBOSOMAL SUBUNIT PROTEIN US14M"/>
    <property type="match status" value="1"/>
</dbReference>
<dbReference type="Pfam" id="PF00253">
    <property type="entry name" value="Ribosomal_S14"/>
    <property type="match status" value="1"/>
</dbReference>
<dbReference type="SUPFAM" id="SSF57716">
    <property type="entry name" value="Glucocorticoid receptor-like (DNA-binding domain)"/>
    <property type="match status" value="1"/>
</dbReference>
<reference evidence="6 8" key="1">
    <citation type="submission" date="1999-04" db="EMBL/GenBank/DDBJ databases">
        <authorList>
            <person name="Rhodes S."/>
        </authorList>
    </citation>
    <scope>NUCLEOTIDE SEQUENCE [LARGE SCALE MRNA]</scope>
</reference>
<reference evidence="6 9" key="2">
    <citation type="journal article" date="2006" name="Nature">
        <title>The DNA sequence and biological annotation of human chromosome 1.</title>
        <authorList>
            <person name="Gregory S.G."/>
            <person name="Barlow K.F."/>
            <person name="McLay K.E."/>
            <person name="Kaul R."/>
            <person name="Swarbreck D."/>
            <person name="Dunham A."/>
            <person name="Scott C.E."/>
            <person name="Howe K.L."/>
            <person name="Woodfine K."/>
            <person name="Spencer C.C.A."/>
            <person name="Jones M.C."/>
            <person name="Gillson C."/>
            <person name="Searle S."/>
            <person name="Zhou Y."/>
            <person name="Kokocinski F."/>
            <person name="McDonald L."/>
            <person name="Evans R."/>
            <person name="Phillips K."/>
            <person name="Atkinson A."/>
            <person name="Cooper R."/>
            <person name="Jones C."/>
            <person name="Hall R.E."/>
            <person name="Andrews T.D."/>
            <person name="Lloyd C."/>
            <person name="Ainscough R."/>
            <person name="Almeida J.P."/>
            <person name="Ambrose K.D."/>
            <person name="Anderson F."/>
            <person name="Andrew R.W."/>
            <person name="Ashwell R.I.S."/>
            <person name="Aubin K."/>
            <person name="Babbage A.K."/>
            <person name="Bagguley C.L."/>
            <person name="Bailey J."/>
            <person name="Beasley H."/>
            <person name="Bethel G."/>
            <person name="Bird C.P."/>
            <person name="Bray-Allen S."/>
            <person name="Brown J.Y."/>
            <person name="Brown A.J."/>
            <person name="Buckley D."/>
            <person name="Burton J."/>
            <person name="Bye J."/>
            <person name="Carder C."/>
            <person name="Chapman J.C."/>
            <person name="Clark S.Y."/>
            <person name="Clarke G."/>
            <person name="Clee C."/>
            <person name="Cobley V."/>
            <person name="Collier R.E."/>
            <person name="Corby N."/>
            <person name="Coville G.J."/>
            <person name="Davies J."/>
            <person name="Deadman R."/>
            <person name="Dunn M."/>
            <person name="Earthrowl M."/>
            <person name="Ellington A.G."/>
            <person name="Errington H."/>
            <person name="Frankish A."/>
            <person name="Frankland J."/>
            <person name="French L."/>
            <person name="Garner P."/>
            <person name="Garnett J."/>
            <person name="Gay L."/>
            <person name="Ghori M.R.J."/>
            <person name="Gibson R."/>
            <person name="Gilby L.M."/>
            <person name="Gillett W."/>
            <person name="Glithero R.J."/>
            <person name="Grafham D.V."/>
            <person name="Griffiths C."/>
            <person name="Griffiths-Jones S."/>
            <person name="Grocock R."/>
            <person name="Hammond S."/>
            <person name="Harrison E.S.I."/>
            <person name="Hart E."/>
            <person name="Haugen E."/>
            <person name="Heath P.D."/>
            <person name="Holmes S."/>
            <person name="Holt K."/>
            <person name="Howden P.J."/>
            <person name="Hunt A.R."/>
            <person name="Hunt S.E."/>
            <person name="Hunter G."/>
            <person name="Isherwood J."/>
            <person name="James R."/>
            <person name="Johnson C."/>
            <person name="Johnson D."/>
            <person name="Joy A."/>
            <person name="Kay M."/>
            <person name="Kershaw J.K."/>
            <person name="Kibukawa M."/>
            <person name="Kimberley A.M."/>
            <person name="King A."/>
            <person name="Knights A.J."/>
            <person name="Lad H."/>
            <person name="Laird G."/>
            <person name="Lawlor S."/>
            <person name="Leongamornlert D.A."/>
            <person name="Lloyd D.M."/>
            <person name="Loveland J."/>
            <person name="Lovell J."/>
            <person name="Lush M.J."/>
            <person name="Lyne R."/>
            <person name="Martin S."/>
            <person name="Mashreghi-Mohammadi M."/>
            <person name="Matthews L."/>
            <person name="Matthews N.S.W."/>
            <person name="McLaren S."/>
            <person name="Milne S."/>
            <person name="Mistry S."/>
            <person name="Moore M.J.F."/>
            <person name="Nickerson T."/>
            <person name="O'Dell C.N."/>
            <person name="Oliver K."/>
            <person name="Palmeiri A."/>
            <person name="Palmer S.A."/>
            <person name="Parker A."/>
            <person name="Patel D."/>
            <person name="Pearce A.V."/>
            <person name="Peck A.I."/>
            <person name="Pelan S."/>
            <person name="Phelps K."/>
            <person name="Phillimore B.J."/>
            <person name="Plumb R."/>
            <person name="Rajan J."/>
            <person name="Raymond C."/>
            <person name="Rouse G."/>
            <person name="Saenphimmachak C."/>
            <person name="Sehra H.K."/>
            <person name="Sheridan E."/>
            <person name="Shownkeen R."/>
            <person name="Sims S."/>
            <person name="Skuce C.D."/>
            <person name="Smith M."/>
            <person name="Steward C."/>
            <person name="Subramanian S."/>
            <person name="Sycamore N."/>
            <person name="Tracey A."/>
            <person name="Tromans A."/>
            <person name="Van Helmond Z."/>
            <person name="Wall M."/>
            <person name="Wallis J.M."/>
            <person name="White S."/>
            <person name="Whitehead S.L."/>
            <person name="Wilkinson J.E."/>
            <person name="Willey D.L."/>
            <person name="Williams H."/>
            <person name="Wilming L."/>
            <person name="Wray P.W."/>
            <person name="Wu Z."/>
            <person name="Coulson A."/>
            <person name="Vaudin M."/>
            <person name="Sulston J.E."/>
            <person name="Durbin R.M."/>
            <person name="Hubbard T."/>
            <person name="Wooster R."/>
            <person name="Dunham I."/>
            <person name="Carter N.P."/>
            <person name="McVean G."/>
            <person name="Ross M.T."/>
            <person name="Harrow J."/>
            <person name="Olson M.V."/>
            <person name="Beck S."/>
            <person name="Rogers J."/>
            <person name="Bentley D.R."/>
        </authorList>
    </citation>
    <scope>NUCLEOTIDE SEQUENCE [LARGE SCALE GENOMIC DNA]</scope>
</reference>
<reference evidence="6 7" key="3">
    <citation type="journal article" date="2004" name="Genome Res.">
        <title>The status, quality, and expansion of the NIH full-length cDNA project: the Mammalian Gene Collection (MGC).</title>
        <authorList>
            <consortium name="The MGC Project Team"/>
        </authorList>
    </citation>
    <scope>NUCLEOTIDE SEQUENCE [LARGE SCALE MRNA]</scope>
    <source>
        <tissue evidence="2">Bone marrow</tissue>
    </source>
</reference>
<reference evidence="6" key="4">
    <citation type="journal article" date="2000" name="J. Biol. Chem.">
        <title>A proteomics approach to the identification of mammalian mitochondrial small subunit ribosomal proteins.</title>
        <authorList>
            <person name="Koc E.C."/>
            <person name="Burkhart W."/>
            <person name="Blackburn K."/>
            <person name="Moseley A."/>
            <person name="Koc H."/>
            <person name="Spremulli L.L."/>
        </authorList>
    </citation>
    <scope>IDENTIFICATION</scope>
</reference>
<reference key="5">
    <citation type="journal article" date="2011" name="BMC Syst. Biol.">
        <title>Initial characterization of the human central proteome.</title>
        <authorList>
            <person name="Burkard T.R."/>
            <person name="Planyavsky M."/>
            <person name="Kaupe I."/>
            <person name="Breitwieser F.P."/>
            <person name="Buerckstuemmer T."/>
            <person name="Bennett K.L."/>
            <person name="Superti-Furga G."/>
            <person name="Colinge J."/>
        </authorList>
    </citation>
    <scope>IDENTIFICATION BY MASS SPECTROMETRY [LARGE SCALE ANALYSIS]</scope>
</reference>
<reference key="6">
    <citation type="journal article" date="2015" name="Proteomics">
        <title>N-terminome analysis of the human mitochondrial proteome.</title>
        <authorList>
            <person name="Vaca Jacome A.S."/>
            <person name="Rabilloud T."/>
            <person name="Schaeffer-Reiss C."/>
            <person name="Rompais M."/>
            <person name="Ayoub D."/>
            <person name="Lane L."/>
            <person name="Bairoch A."/>
            <person name="Van Dorsselaer A."/>
            <person name="Carapito C."/>
        </authorList>
    </citation>
    <scope>IDENTIFICATION BY MASS SPECTROMETRY [LARGE SCALE ANALYSIS]</scope>
</reference>
<reference key="7">
    <citation type="journal article" date="2019" name="Hum. Mol. Genet.">
        <title>A variant in MRPS14 (uS14m) causes perinatal hypertrophic cardiomyopathy with neonatal lactic acidosis, growth retardation, dysmorphic features and neurological involvement.</title>
        <authorList>
            <person name="Jackson C.B."/>
            <person name="Huemer M."/>
            <person name="Bolognini R."/>
            <person name="Martin F."/>
            <person name="Szinnai G."/>
            <person name="Donner B.C."/>
            <person name="Richter U."/>
            <person name="Battersby B.J."/>
            <person name="Nuoffer J.M."/>
            <person name="Suomalainen A."/>
            <person name="Schaller A."/>
        </authorList>
    </citation>
    <scope>INVOLVEMENT IN COXPD38</scope>
    <scope>VARIANT COXPD38 CYS-108</scope>
</reference>
<reference evidence="11" key="8">
    <citation type="journal article" date="2015" name="Science">
        <title>Ribosome. The structure of the human mitochondrial ribosome.</title>
        <authorList>
            <person name="Amunts A."/>
            <person name="Brown A."/>
            <person name="Toots J."/>
            <person name="Scheres S.H."/>
            <person name="Ramakrishnan V."/>
        </authorList>
    </citation>
    <scope>STRUCTURE BY ELECTRON MICROSCOPY (3.50 ANGSTROMS)</scope>
    <scope>SUBCELLULAR LOCATION</scope>
    <scope>SUBUNIT</scope>
</reference>
<sequence>MAAFMLGSLLRTFKQMVPSSASGQVRSHYVDWRMWRDVKRRKMAYEYADERLRINSLRKNTILPKILQDVADEEIAALPRDSCPVRIRNRCVMTSRPRGVKRRWRLSRIVFRHLADHGQLSGIQRATW</sequence>
<organism>
    <name type="scientific">Homo sapiens</name>
    <name type="common">Human</name>
    <dbReference type="NCBI Taxonomy" id="9606"/>
    <lineage>
        <taxon>Eukaryota</taxon>
        <taxon>Metazoa</taxon>
        <taxon>Chordata</taxon>
        <taxon>Craniata</taxon>
        <taxon>Vertebrata</taxon>
        <taxon>Euteleostomi</taxon>
        <taxon>Mammalia</taxon>
        <taxon>Eutheria</taxon>
        <taxon>Euarchontoglires</taxon>
        <taxon>Primates</taxon>
        <taxon>Haplorrhini</taxon>
        <taxon>Catarrhini</taxon>
        <taxon>Hominidae</taxon>
        <taxon>Homo</taxon>
    </lineage>
</organism>
<feature type="chain" id="PRO_0000131013" description="Small ribosomal subunit protein uS14m">
    <location>
        <begin position="1"/>
        <end position="128"/>
    </location>
</feature>
<feature type="sequence variant" id="VAR_082116" description="In COXPD38; dbSNP:rs990763738." evidence="4">
    <original>R</original>
    <variation>C</variation>
    <location>
        <position position="108"/>
    </location>
</feature>
<feature type="helix" evidence="15">
    <location>
        <begin position="32"/>
        <end position="46"/>
    </location>
</feature>
<feature type="helix" evidence="13">
    <location>
        <begin position="49"/>
        <end position="57"/>
    </location>
</feature>
<feature type="strand" evidence="14">
    <location>
        <begin position="61"/>
        <end position="63"/>
    </location>
</feature>
<feature type="helix" evidence="14">
    <location>
        <begin position="65"/>
        <end position="77"/>
    </location>
</feature>
<feature type="helix" evidence="14">
    <location>
        <begin position="80"/>
        <end position="82"/>
    </location>
</feature>
<feature type="helix" evidence="14">
    <location>
        <begin position="84"/>
        <end position="86"/>
    </location>
</feature>
<feature type="turn" evidence="14">
    <location>
        <begin position="92"/>
        <end position="94"/>
    </location>
</feature>
<feature type="strand" evidence="14">
    <location>
        <begin position="97"/>
        <end position="100"/>
    </location>
</feature>
<feature type="turn" evidence="13">
    <location>
        <begin position="102"/>
        <end position="105"/>
    </location>
</feature>
<feature type="helix" evidence="13">
    <location>
        <begin position="108"/>
        <end position="116"/>
    </location>
</feature>
<feature type="strand" evidence="12">
    <location>
        <begin position="123"/>
        <end position="125"/>
    </location>
</feature>
<accession>O60783</accession>
<accession>Q5R358</accession>
<evidence type="ECO:0000250" key="1">
    <source>
        <dbReference type="UniProtKB" id="Q9CR88"/>
    </source>
</evidence>
<evidence type="ECO:0000269" key="2">
    <source>
    </source>
</evidence>
<evidence type="ECO:0000269" key="3">
    <source>
    </source>
</evidence>
<evidence type="ECO:0000269" key="4">
    <source>
    </source>
</evidence>
<evidence type="ECO:0000303" key="5">
    <source>
    </source>
</evidence>
<evidence type="ECO:0000305" key="6"/>
<evidence type="ECO:0000312" key="7">
    <source>
        <dbReference type="EMBL" id="AAH09788.1"/>
    </source>
</evidence>
<evidence type="ECO:0000312" key="8">
    <source>
        <dbReference type="EMBL" id="CAB41269.1"/>
    </source>
</evidence>
<evidence type="ECO:0000312" key="9">
    <source>
        <dbReference type="EMBL" id="Z99297"/>
    </source>
</evidence>
<evidence type="ECO:0000312" key="10">
    <source>
        <dbReference type="HGNC" id="HGNC:14049"/>
    </source>
</evidence>
<evidence type="ECO:0007744" key="11">
    <source>
        <dbReference type="PDB" id="3J9M"/>
    </source>
</evidence>
<evidence type="ECO:0007829" key="12">
    <source>
        <dbReference type="PDB" id="8CSQ"/>
    </source>
</evidence>
<evidence type="ECO:0007829" key="13">
    <source>
        <dbReference type="PDB" id="8CSS"/>
    </source>
</evidence>
<evidence type="ECO:0007829" key="14">
    <source>
        <dbReference type="PDB" id="8CST"/>
    </source>
</evidence>
<evidence type="ECO:0007829" key="15">
    <source>
        <dbReference type="PDB" id="8QRN"/>
    </source>
</evidence>
<proteinExistence type="evidence at protein level"/>
<gene>
    <name evidence="10" type="primary">MRPS14</name>
</gene>